<dbReference type="EC" id="2.7.4.6" evidence="1"/>
<dbReference type="EMBL" id="CP000781">
    <property type="protein sequence ID" value="ABS67571.1"/>
    <property type="molecule type" value="Genomic_DNA"/>
</dbReference>
<dbReference type="SMR" id="A7IHS8"/>
<dbReference type="STRING" id="78245.Xaut_2328"/>
<dbReference type="KEGG" id="xau:Xaut_2328"/>
<dbReference type="eggNOG" id="COG0105">
    <property type="taxonomic scope" value="Bacteria"/>
</dbReference>
<dbReference type="HOGENOM" id="CLU_060216_8_1_5"/>
<dbReference type="OrthoDB" id="9801161at2"/>
<dbReference type="PhylomeDB" id="A7IHS8"/>
<dbReference type="Proteomes" id="UP000002417">
    <property type="component" value="Chromosome"/>
</dbReference>
<dbReference type="GO" id="GO:0005737">
    <property type="term" value="C:cytoplasm"/>
    <property type="evidence" value="ECO:0007669"/>
    <property type="project" value="UniProtKB-SubCell"/>
</dbReference>
<dbReference type="GO" id="GO:0005524">
    <property type="term" value="F:ATP binding"/>
    <property type="evidence" value="ECO:0007669"/>
    <property type="project" value="UniProtKB-UniRule"/>
</dbReference>
<dbReference type="GO" id="GO:0046872">
    <property type="term" value="F:metal ion binding"/>
    <property type="evidence" value="ECO:0007669"/>
    <property type="project" value="UniProtKB-KW"/>
</dbReference>
<dbReference type="GO" id="GO:0004550">
    <property type="term" value="F:nucleoside diphosphate kinase activity"/>
    <property type="evidence" value="ECO:0007669"/>
    <property type="project" value="UniProtKB-UniRule"/>
</dbReference>
<dbReference type="GO" id="GO:0006241">
    <property type="term" value="P:CTP biosynthetic process"/>
    <property type="evidence" value="ECO:0007669"/>
    <property type="project" value="UniProtKB-UniRule"/>
</dbReference>
<dbReference type="GO" id="GO:0006183">
    <property type="term" value="P:GTP biosynthetic process"/>
    <property type="evidence" value="ECO:0007669"/>
    <property type="project" value="UniProtKB-UniRule"/>
</dbReference>
<dbReference type="GO" id="GO:0006228">
    <property type="term" value="P:UTP biosynthetic process"/>
    <property type="evidence" value="ECO:0007669"/>
    <property type="project" value="UniProtKB-UniRule"/>
</dbReference>
<dbReference type="CDD" id="cd04413">
    <property type="entry name" value="NDPk_I"/>
    <property type="match status" value="1"/>
</dbReference>
<dbReference type="FunFam" id="3.30.70.141:FF:000017">
    <property type="entry name" value="Nucleoside diphosphate kinase"/>
    <property type="match status" value="1"/>
</dbReference>
<dbReference type="Gene3D" id="3.30.70.141">
    <property type="entry name" value="Nucleoside diphosphate kinase-like domain"/>
    <property type="match status" value="1"/>
</dbReference>
<dbReference type="HAMAP" id="MF_00451">
    <property type="entry name" value="NDP_kinase"/>
    <property type="match status" value="1"/>
</dbReference>
<dbReference type="InterPro" id="IPR034907">
    <property type="entry name" value="NDK-like_dom"/>
</dbReference>
<dbReference type="InterPro" id="IPR036850">
    <property type="entry name" value="NDK-like_dom_sf"/>
</dbReference>
<dbReference type="InterPro" id="IPR001564">
    <property type="entry name" value="Nucleoside_diP_kinase"/>
</dbReference>
<dbReference type="InterPro" id="IPR023005">
    <property type="entry name" value="Nucleoside_diP_kinase_AS"/>
</dbReference>
<dbReference type="NCBIfam" id="NF001908">
    <property type="entry name" value="PRK00668.1"/>
    <property type="match status" value="1"/>
</dbReference>
<dbReference type="PANTHER" id="PTHR46161">
    <property type="entry name" value="NUCLEOSIDE DIPHOSPHATE KINASE"/>
    <property type="match status" value="1"/>
</dbReference>
<dbReference type="PANTHER" id="PTHR46161:SF3">
    <property type="entry name" value="NUCLEOSIDE DIPHOSPHATE KINASE DDB_G0292928-RELATED"/>
    <property type="match status" value="1"/>
</dbReference>
<dbReference type="Pfam" id="PF00334">
    <property type="entry name" value="NDK"/>
    <property type="match status" value="1"/>
</dbReference>
<dbReference type="PRINTS" id="PR01243">
    <property type="entry name" value="NUCDPKINASE"/>
</dbReference>
<dbReference type="SMART" id="SM00562">
    <property type="entry name" value="NDK"/>
    <property type="match status" value="1"/>
</dbReference>
<dbReference type="SUPFAM" id="SSF54919">
    <property type="entry name" value="Nucleoside diphosphate kinase, NDK"/>
    <property type="match status" value="1"/>
</dbReference>
<dbReference type="PROSITE" id="PS00469">
    <property type="entry name" value="NDPK"/>
    <property type="match status" value="1"/>
</dbReference>
<dbReference type="PROSITE" id="PS51374">
    <property type="entry name" value="NDPK_LIKE"/>
    <property type="match status" value="1"/>
</dbReference>
<sequence>MAIERTFSIIKPDATRRNLTGAVNAVIETAGLRIVAQKRILMTKAQAETFYAVHSARPFFGDLVSFMTSGPVVVQVLEAENAVAKYREVMGATNPANAAEGTIRKLLAESIEANSAHGSDSVENAAVEIAQFFSGNEIVG</sequence>
<gene>
    <name evidence="1" type="primary">ndk</name>
    <name type="ordered locus">Xaut_2328</name>
</gene>
<keyword id="KW-0067">ATP-binding</keyword>
<keyword id="KW-0963">Cytoplasm</keyword>
<keyword id="KW-0418">Kinase</keyword>
<keyword id="KW-0460">Magnesium</keyword>
<keyword id="KW-0479">Metal-binding</keyword>
<keyword id="KW-0546">Nucleotide metabolism</keyword>
<keyword id="KW-0547">Nucleotide-binding</keyword>
<keyword id="KW-0597">Phosphoprotein</keyword>
<keyword id="KW-1185">Reference proteome</keyword>
<keyword id="KW-0808">Transferase</keyword>
<name>NDK_XANP2</name>
<proteinExistence type="inferred from homology"/>
<comment type="function">
    <text evidence="1">Major role in the synthesis of nucleoside triphosphates other than ATP. The ATP gamma phosphate is transferred to the NDP beta phosphate via a ping-pong mechanism, using a phosphorylated active-site intermediate.</text>
</comment>
<comment type="catalytic activity">
    <reaction evidence="1">
        <text>a 2'-deoxyribonucleoside 5'-diphosphate + ATP = a 2'-deoxyribonucleoside 5'-triphosphate + ADP</text>
        <dbReference type="Rhea" id="RHEA:44640"/>
        <dbReference type="ChEBI" id="CHEBI:30616"/>
        <dbReference type="ChEBI" id="CHEBI:61560"/>
        <dbReference type="ChEBI" id="CHEBI:73316"/>
        <dbReference type="ChEBI" id="CHEBI:456216"/>
        <dbReference type="EC" id="2.7.4.6"/>
    </reaction>
</comment>
<comment type="catalytic activity">
    <reaction evidence="1">
        <text>a ribonucleoside 5'-diphosphate + ATP = a ribonucleoside 5'-triphosphate + ADP</text>
        <dbReference type="Rhea" id="RHEA:18113"/>
        <dbReference type="ChEBI" id="CHEBI:30616"/>
        <dbReference type="ChEBI" id="CHEBI:57930"/>
        <dbReference type="ChEBI" id="CHEBI:61557"/>
        <dbReference type="ChEBI" id="CHEBI:456216"/>
        <dbReference type="EC" id="2.7.4.6"/>
    </reaction>
</comment>
<comment type="cofactor">
    <cofactor evidence="1">
        <name>Mg(2+)</name>
        <dbReference type="ChEBI" id="CHEBI:18420"/>
    </cofactor>
</comment>
<comment type="subunit">
    <text evidence="1">Homotetramer.</text>
</comment>
<comment type="subcellular location">
    <subcellularLocation>
        <location evidence="1">Cytoplasm</location>
    </subcellularLocation>
</comment>
<comment type="similarity">
    <text evidence="1">Belongs to the NDK family.</text>
</comment>
<evidence type="ECO:0000255" key="1">
    <source>
        <dbReference type="HAMAP-Rule" id="MF_00451"/>
    </source>
</evidence>
<feature type="chain" id="PRO_1000125031" description="Nucleoside diphosphate kinase">
    <location>
        <begin position="1"/>
        <end position="140"/>
    </location>
</feature>
<feature type="active site" description="Pros-phosphohistidine intermediate" evidence="1">
    <location>
        <position position="117"/>
    </location>
</feature>
<feature type="binding site" evidence="1">
    <location>
        <position position="11"/>
    </location>
    <ligand>
        <name>ATP</name>
        <dbReference type="ChEBI" id="CHEBI:30616"/>
    </ligand>
</feature>
<feature type="binding site" evidence="1">
    <location>
        <position position="59"/>
    </location>
    <ligand>
        <name>ATP</name>
        <dbReference type="ChEBI" id="CHEBI:30616"/>
    </ligand>
</feature>
<feature type="binding site" evidence="1">
    <location>
        <position position="87"/>
    </location>
    <ligand>
        <name>ATP</name>
        <dbReference type="ChEBI" id="CHEBI:30616"/>
    </ligand>
</feature>
<feature type="binding site" evidence="1">
    <location>
        <position position="93"/>
    </location>
    <ligand>
        <name>ATP</name>
        <dbReference type="ChEBI" id="CHEBI:30616"/>
    </ligand>
</feature>
<feature type="binding site" evidence="1">
    <location>
        <position position="104"/>
    </location>
    <ligand>
        <name>ATP</name>
        <dbReference type="ChEBI" id="CHEBI:30616"/>
    </ligand>
</feature>
<feature type="binding site" evidence="1">
    <location>
        <position position="114"/>
    </location>
    <ligand>
        <name>ATP</name>
        <dbReference type="ChEBI" id="CHEBI:30616"/>
    </ligand>
</feature>
<reference key="1">
    <citation type="submission" date="2007-07" db="EMBL/GenBank/DDBJ databases">
        <title>Complete sequence of chromosome of Xanthobacter autotrophicus Py2.</title>
        <authorList>
            <consortium name="US DOE Joint Genome Institute"/>
            <person name="Copeland A."/>
            <person name="Lucas S."/>
            <person name="Lapidus A."/>
            <person name="Barry K."/>
            <person name="Glavina del Rio T."/>
            <person name="Hammon N."/>
            <person name="Israni S."/>
            <person name="Dalin E."/>
            <person name="Tice H."/>
            <person name="Pitluck S."/>
            <person name="Sims D."/>
            <person name="Brettin T."/>
            <person name="Bruce D."/>
            <person name="Detter J.C."/>
            <person name="Han C."/>
            <person name="Tapia R."/>
            <person name="Brainard J."/>
            <person name="Schmutz J."/>
            <person name="Larimer F."/>
            <person name="Land M."/>
            <person name="Hauser L."/>
            <person name="Kyrpides N."/>
            <person name="Kim E."/>
            <person name="Ensigns S.A."/>
            <person name="Richardson P."/>
        </authorList>
    </citation>
    <scope>NUCLEOTIDE SEQUENCE [LARGE SCALE GENOMIC DNA]</scope>
    <source>
        <strain>ATCC BAA-1158 / Py2</strain>
    </source>
</reference>
<accession>A7IHS8</accession>
<organism>
    <name type="scientific">Xanthobacter autotrophicus (strain ATCC BAA-1158 / Py2)</name>
    <dbReference type="NCBI Taxonomy" id="78245"/>
    <lineage>
        <taxon>Bacteria</taxon>
        <taxon>Pseudomonadati</taxon>
        <taxon>Pseudomonadota</taxon>
        <taxon>Alphaproteobacteria</taxon>
        <taxon>Hyphomicrobiales</taxon>
        <taxon>Xanthobacteraceae</taxon>
        <taxon>Xanthobacter</taxon>
    </lineage>
</organism>
<protein>
    <recommendedName>
        <fullName evidence="1">Nucleoside diphosphate kinase</fullName>
        <shortName evidence="1">NDK</shortName>
        <shortName evidence="1">NDP kinase</shortName>
        <ecNumber evidence="1">2.7.4.6</ecNumber>
    </recommendedName>
    <alternativeName>
        <fullName evidence="1">Nucleoside-2-P kinase</fullName>
    </alternativeName>
</protein>